<proteinExistence type="inferred from homology"/>
<accession>I1RMK9</accession>
<gene>
    <name evidence="7" type="primary">ATG37</name>
    <name type="ORF">FG05200</name>
    <name type="ORF">FGRAMPH1_01T17347</name>
</gene>
<sequence>MADSVDRVFVHALNTVKKIPKTGASRPPPTDRLRLYGLYKQAMEGDVDGVMERPTAASGLASDELQREKDKWDAWNLQKGLSRTESKRRYIEALIDTMHRYATTPDAEELVSELEFVWNQIKDNSPSSSLSSPRPNQSTGAGAQQPQQEPEQASDGEGPLKELRPMSEYDEAELRSQRQVDLEDDEVDVPTSDRSSGRWQRKVERALTTMSAEVAALREQIMTGREWRTKKERSVPAWVKWFAWLLVKHIFADLVILSVVLLWLRKRKDQRLEDIVRAGVRLMREYVRNVLPSRG</sequence>
<feature type="chain" id="PRO_0000443930" description="Autophagy-related protein 37">
    <location>
        <begin position="1"/>
        <end position="295"/>
    </location>
</feature>
<feature type="transmembrane region" description="Helical" evidence="2">
    <location>
        <begin position="244"/>
        <end position="264"/>
    </location>
</feature>
<feature type="domain" description="ACB" evidence="4">
    <location>
        <begin position="5"/>
        <end position="103"/>
    </location>
</feature>
<feature type="region of interest" description="Disordered" evidence="5">
    <location>
        <begin position="124"/>
        <end position="162"/>
    </location>
</feature>
<feature type="region of interest" description="Disordered" evidence="5">
    <location>
        <begin position="174"/>
        <end position="201"/>
    </location>
</feature>
<feature type="compositionally biased region" description="Low complexity" evidence="5">
    <location>
        <begin position="125"/>
        <end position="153"/>
    </location>
</feature>
<feature type="glycosylation site" description="N-linked (GlcNAc...) asparagine" evidence="3">
    <location>
        <position position="136"/>
    </location>
</feature>
<comment type="function">
    <text evidence="1">Acyl-CoA binding protein which acts as the peroxisome receptor for pexophagy (By similarity). Required for both micropexophagy and macropexophagy, but not for the cytoplasm to vacuole transport (Cvt) or autophagy pathways (By similarity). Required for functional micropexophagic apparatus (MIPA) and relocation of ATG11 to the peroxisome-sequestering arms of the vacuole (By similarity). Binds palmitoyl-CoA but not oleyl-CoA (By similarity).</text>
</comment>
<comment type="subcellular location">
    <subcellularLocation>
        <location evidence="1">Peroxisome membrane</location>
        <topology evidence="1">Single-pass membrane protein</topology>
    </subcellularLocation>
</comment>
<comment type="disruption phenotype">
    <text evidence="6">Does not significantly decrease the growth rate under nutrient-rich conditions (PubMed:28894236).</text>
</comment>
<comment type="similarity">
    <text evidence="8">Belongs to the ATG37 family.</text>
</comment>
<dbReference type="EMBL" id="HG970334">
    <property type="protein sequence ID" value="CEF87250.1"/>
    <property type="molecule type" value="Genomic_DNA"/>
</dbReference>
<dbReference type="RefSeq" id="XP_011323708.1">
    <property type="nucleotide sequence ID" value="XM_011325406.1"/>
</dbReference>
<dbReference type="SMR" id="I1RMK9"/>
<dbReference type="STRING" id="229533.I1RMK9"/>
<dbReference type="GlyCosmos" id="I1RMK9">
    <property type="glycosylation" value="1 site, No reported glycans"/>
</dbReference>
<dbReference type="KEGG" id="fgr:FGSG_05200"/>
<dbReference type="VEuPathDB" id="FungiDB:FGRAMPH1_01G17347"/>
<dbReference type="eggNOG" id="KOG0817">
    <property type="taxonomic scope" value="Eukaryota"/>
</dbReference>
<dbReference type="HOGENOM" id="CLU_043304_1_0_1"/>
<dbReference type="InParanoid" id="I1RMK9"/>
<dbReference type="OrthoDB" id="71632at110618"/>
<dbReference type="Proteomes" id="UP000070720">
    <property type="component" value="Chromosome 3"/>
</dbReference>
<dbReference type="GO" id="GO:0005778">
    <property type="term" value="C:peroxisomal membrane"/>
    <property type="evidence" value="ECO:0007669"/>
    <property type="project" value="UniProtKB-SubCell"/>
</dbReference>
<dbReference type="GO" id="GO:0000062">
    <property type="term" value="F:fatty-acyl-CoA binding"/>
    <property type="evidence" value="ECO:0007669"/>
    <property type="project" value="InterPro"/>
</dbReference>
<dbReference type="GO" id="GO:0006914">
    <property type="term" value="P:autophagy"/>
    <property type="evidence" value="ECO:0007669"/>
    <property type="project" value="UniProtKB-KW"/>
</dbReference>
<dbReference type="GO" id="GO:0006631">
    <property type="term" value="P:fatty acid metabolic process"/>
    <property type="evidence" value="ECO:0007669"/>
    <property type="project" value="TreeGrafter"/>
</dbReference>
<dbReference type="GO" id="GO:0015031">
    <property type="term" value="P:protein transport"/>
    <property type="evidence" value="ECO:0007669"/>
    <property type="project" value="UniProtKB-KW"/>
</dbReference>
<dbReference type="Gene3D" id="1.20.80.10">
    <property type="match status" value="1"/>
</dbReference>
<dbReference type="InterPro" id="IPR000582">
    <property type="entry name" value="Acyl-CoA-binding_protein"/>
</dbReference>
<dbReference type="InterPro" id="IPR035984">
    <property type="entry name" value="Acyl-CoA-binding_sf"/>
</dbReference>
<dbReference type="InterPro" id="IPR014352">
    <property type="entry name" value="FERM/acyl-CoA-bd_prot_sf"/>
</dbReference>
<dbReference type="PANTHER" id="PTHR23310">
    <property type="entry name" value="ACYL-COA-BINDING PROTEIN, ACBP"/>
    <property type="match status" value="1"/>
</dbReference>
<dbReference type="PANTHER" id="PTHR23310:SF133">
    <property type="entry name" value="COA BINDING PROTEIN, PUTATIVE (AFU_ORTHOLOGUE AFUA_1G12300)-RELATED"/>
    <property type="match status" value="1"/>
</dbReference>
<dbReference type="Pfam" id="PF00887">
    <property type="entry name" value="ACBP"/>
    <property type="match status" value="1"/>
</dbReference>
<dbReference type="SUPFAM" id="SSF47027">
    <property type="entry name" value="Acyl-CoA binding protein"/>
    <property type="match status" value="1"/>
</dbReference>
<dbReference type="PROSITE" id="PS51228">
    <property type="entry name" value="ACB_2"/>
    <property type="match status" value="1"/>
</dbReference>
<keyword id="KW-0072">Autophagy</keyword>
<keyword id="KW-0325">Glycoprotein</keyword>
<keyword id="KW-0446">Lipid-binding</keyword>
<keyword id="KW-0472">Membrane</keyword>
<keyword id="KW-0576">Peroxisome</keyword>
<keyword id="KW-0653">Protein transport</keyword>
<keyword id="KW-1185">Reference proteome</keyword>
<keyword id="KW-0812">Transmembrane</keyword>
<keyword id="KW-1133">Transmembrane helix</keyword>
<keyword id="KW-0813">Transport</keyword>
<organism>
    <name type="scientific">Gibberella zeae (strain ATCC MYA-4620 / CBS 123657 / FGSC 9075 / NRRL 31084 / PH-1)</name>
    <name type="common">Wheat head blight fungus</name>
    <name type="synonym">Fusarium graminearum</name>
    <dbReference type="NCBI Taxonomy" id="229533"/>
    <lineage>
        <taxon>Eukaryota</taxon>
        <taxon>Fungi</taxon>
        <taxon>Dikarya</taxon>
        <taxon>Ascomycota</taxon>
        <taxon>Pezizomycotina</taxon>
        <taxon>Sordariomycetes</taxon>
        <taxon>Hypocreomycetidae</taxon>
        <taxon>Hypocreales</taxon>
        <taxon>Nectriaceae</taxon>
        <taxon>Fusarium</taxon>
    </lineage>
</organism>
<reference key="1">
    <citation type="journal article" date="2007" name="Science">
        <title>The Fusarium graminearum genome reveals a link between localized polymorphism and pathogen specialization.</title>
        <authorList>
            <person name="Cuomo C.A."/>
            <person name="Gueldener U."/>
            <person name="Xu J.-R."/>
            <person name="Trail F."/>
            <person name="Turgeon B.G."/>
            <person name="Di Pietro A."/>
            <person name="Walton J.D."/>
            <person name="Ma L.-J."/>
            <person name="Baker S.E."/>
            <person name="Rep M."/>
            <person name="Adam G."/>
            <person name="Antoniw J."/>
            <person name="Baldwin T."/>
            <person name="Calvo S.E."/>
            <person name="Chang Y.-L."/>
            <person name="DeCaprio D."/>
            <person name="Gale L.R."/>
            <person name="Gnerre S."/>
            <person name="Goswami R.S."/>
            <person name="Hammond-Kosack K."/>
            <person name="Harris L.J."/>
            <person name="Hilburn K."/>
            <person name="Kennell J.C."/>
            <person name="Kroken S."/>
            <person name="Magnuson J.K."/>
            <person name="Mannhaupt G."/>
            <person name="Mauceli E.W."/>
            <person name="Mewes H.-W."/>
            <person name="Mitterbauer R."/>
            <person name="Muehlbauer G."/>
            <person name="Muensterkoetter M."/>
            <person name="Nelson D."/>
            <person name="O'Donnell K."/>
            <person name="Ouellet T."/>
            <person name="Qi W."/>
            <person name="Quesneville H."/>
            <person name="Roncero M.I.G."/>
            <person name="Seong K.-Y."/>
            <person name="Tetko I.V."/>
            <person name="Urban M."/>
            <person name="Waalwijk C."/>
            <person name="Ward T.J."/>
            <person name="Yao J."/>
            <person name="Birren B.W."/>
            <person name="Kistler H.C."/>
        </authorList>
    </citation>
    <scope>NUCLEOTIDE SEQUENCE [LARGE SCALE GENOMIC DNA]</scope>
    <source>
        <strain>ATCC MYA-4620 / CBS 123657 / FGSC 9075 / NRRL 31084 / PH-1</strain>
    </source>
</reference>
<reference key="2">
    <citation type="journal article" date="2010" name="Nature">
        <title>Comparative genomics reveals mobile pathogenicity chromosomes in Fusarium.</title>
        <authorList>
            <person name="Ma L.-J."/>
            <person name="van der Does H.C."/>
            <person name="Borkovich K.A."/>
            <person name="Coleman J.J."/>
            <person name="Daboussi M.-J."/>
            <person name="Di Pietro A."/>
            <person name="Dufresne M."/>
            <person name="Freitag M."/>
            <person name="Grabherr M."/>
            <person name="Henrissat B."/>
            <person name="Houterman P.M."/>
            <person name="Kang S."/>
            <person name="Shim W.-B."/>
            <person name="Woloshuk C."/>
            <person name="Xie X."/>
            <person name="Xu J.-R."/>
            <person name="Antoniw J."/>
            <person name="Baker S.E."/>
            <person name="Bluhm B.H."/>
            <person name="Breakspear A."/>
            <person name="Brown D.W."/>
            <person name="Butchko R.A.E."/>
            <person name="Chapman S."/>
            <person name="Coulson R."/>
            <person name="Coutinho P.M."/>
            <person name="Danchin E.G.J."/>
            <person name="Diener A."/>
            <person name="Gale L.R."/>
            <person name="Gardiner D.M."/>
            <person name="Goff S."/>
            <person name="Hammond-Kosack K.E."/>
            <person name="Hilburn K."/>
            <person name="Hua-Van A."/>
            <person name="Jonkers W."/>
            <person name="Kazan K."/>
            <person name="Kodira C.D."/>
            <person name="Koehrsen M."/>
            <person name="Kumar L."/>
            <person name="Lee Y.-H."/>
            <person name="Li L."/>
            <person name="Manners J.M."/>
            <person name="Miranda-Saavedra D."/>
            <person name="Mukherjee M."/>
            <person name="Park G."/>
            <person name="Park J."/>
            <person name="Park S.-Y."/>
            <person name="Proctor R.H."/>
            <person name="Regev A."/>
            <person name="Ruiz-Roldan M.C."/>
            <person name="Sain D."/>
            <person name="Sakthikumar S."/>
            <person name="Sykes S."/>
            <person name="Schwartz D.C."/>
            <person name="Turgeon B.G."/>
            <person name="Wapinski I."/>
            <person name="Yoder O."/>
            <person name="Young S."/>
            <person name="Zeng Q."/>
            <person name="Zhou S."/>
            <person name="Galagan J."/>
            <person name="Cuomo C.A."/>
            <person name="Kistler H.C."/>
            <person name="Rep M."/>
        </authorList>
    </citation>
    <scope>GENOME REANNOTATION</scope>
    <source>
        <strain>ATCC MYA-4620 / CBS 123657 / FGSC 9075 / NRRL 31084 / PH-1</strain>
    </source>
</reference>
<reference key="3">
    <citation type="journal article" date="2015" name="BMC Genomics">
        <title>The completed genome sequence of the pathogenic ascomycete fungus Fusarium graminearum.</title>
        <authorList>
            <person name="King R."/>
            <person name="Urban M."/>
            <person name="Hammond-Kosack M.C.U."/>
            <person name="Hassani-Pak K."/>
            <person name="Hammond-Kosack K.E."/>
        </authorList>
    </citation>
    <scope>NUCLEOTIDE SEQUENCE [LARGE SCALE GENOMIC DNA]</scope>
    <source>
        <strain>ATCC MYA-4620 / CBS 123657 / FGSC 9075 / NRRL 31084 / PH-1</strain>
    </source>
</reference>
<reference key="4">
    <citation type="journal article" date="2017" name="Sci. Rep.">
        <title>Genome-wide functional analysis reveals that autophagy is necessary for growth, sporulation, deoxynivalenol production and virulence in Fusarium graminearum.</title>
        <authorList>
            <person name="Lv W."/>
            <person name="Wang C."/>
            <person name="Yang N."/>
            <person name="Que Y."/>
            <person name="Talbot N.J."/>
            <person name="Wang Z."/>
        </authorList>
    </citation>
    <scope>IDENTIFICATION</scope>
    <scope>DISRUPTION PHENOTYPE</scope>
</reference>
<protein>
    <recommendedName>
        <fullName evidence="7">Autophagy-related protein 37</fullName>
    </recommendedName>
</protein>
<name>ATG37_GIBZE</name>
<evidence type="ECO:0000250" key="1">
    <source>
        <dbReference type="UniProtKB" id="C4R8D7"/>
    </source>
</evidence>
<evidence type="ECO:0000255" key="2"/>
<evidence type="ECO:0000255" key="3">
    <source>
        <dbReference type="PROSITE-ProRule" id="PRU00498"/>
    </source>
</evidence>
<evidence type="ECO:0000255" key="4">
    <source>
        <dbReference type="PROSITE-ProRule" id="PRU00573"/>
    </source>
</evidence>
<evidence type="ECO:0000256" key="5">
    <source>
        <dbReference type="SAM" id="MobiDB-lite"/>
    </source>
</evidence>
<evidence type="ECO:0000269" key="6">
    <source>
    </source>
</evidence>
<evidence type="ECO:0000303" key="7">
    <source>
    </source>
</evidence>
<evidence type="ECO:0000305" key="8"/>